<proteinExistence type="inferred from homology"/>
<evidence type="ECO:0000255" key="1">
    <source>
        <dbReference type="HAMAP-Rule" id="MF_01712"/>
    </source>
</evidence>
<accession>Q2YL69</accession>
<name>NIKE_BRUA2</name>
<keyword id="KW-0067">ATP-binding</keyword>
<keyword id="KW-0997">Cell inner membrane</keyword>
<keyword id="KW-1003">Cell membrane</keyword>
<keyword id="KW-0406">Ion transport</keyword>
<keyword id="KW-0472">Membrane</keyword>
<keyword id="KW-0533">Nickel</keyword>
<keyword id="KW-0921">Nickel transport</keyword>
<keyword id="KW-0547">Nucleotide-binding</keyword>
<keyword id="KW-1185">Reference proteome</keyword>
<keyword id="KW-1278">Translocase</keyword>
<keyword id="KW-0813">Transport</keyword>
<protein>
    <recommendedName>
        <fullName evidence="1">Nickel import ATP-binding protein NikE</fullName>
        <ecNumber evidence="1">7.2.2.11</ecNumber>
    </recommendedName>
</protein>
<comment type="function">
    <text evidence="1">Part of the ABC transporter complex NikABCDE involved in nickel import. Responsible for energy coupling to the transport system.</text>
</comment>
<comment type="catalytic activity">
    <reaction evidence="1">
        <text>Ni(2+)(out) + ATP + H2O = Ni(2+)(in) + ADP + phosphate + H(+)</text>
        <dbReference type="Rhea" id="RHEA:15557"/>
        <dbReference type="ChEBI" id="CHEBI:15377"/>
        <dbReference type="ChEBI" id="CHEBI:15378"/>
        <dbReference type="ChEBI" id="CHEBI:30616"/>
        <dbReference type="ChEBI" id="CHEBI:43474"/>
        <dbReference type="ChEBI" id="CHEBI:49786"/>
        <dbReference type="ChEBI" id="CHEBI:456216"/>
        <dbReference type="EC" id="7.2.2.11"/>
    </reaction>
</comment>
<comment type="subunit">
    <text evidence="1">The complex is composed of two ATP-binding proteins (NikD and NikE), two transmembrane proteins (NikB and NikC) and a solute-binding protein (NikA).</text>
</comment>
<comment type="subcellular location">
    <subcellularLocation>
        <location evidence="1">Cell inner membrane</location>
        <topology evidence="1">Peripheral membrane protein</topology>
    </subcellularLocation>
</comment>
<comment type="similarity">
    <text evidence="1">Belongs to the ABC transporter superfamily. Nickel importer (TC 3.A.1.5.3) family.</text>
</comment>
<feature type="chain" id="PRO_0000260204" description="Nickel import ATP-binding protein NikE">
    <location>
        <begin position="1"/>
        <end position="266"/>
    </location>
</feature>
<feature type="domain" description="ABC transporter" evidence="1">
    <location>
        <begin position="4"/>
        <end position="252"/>
    </location>
</feature>
<feature type="binding site" evidence="1">
    <location>
        <begin position="45"/>
        <end position="52"/>
    </location>
    <ligand>
        <name>ATP</name>
        <dbReference type="ChEBI" id="CHEBI:30616"/>
    </ligand>
</feature>
<sequence>MSLISADNIVKIYQSHSLVGASARKTMLHDISISIGQGETVALLGRSGCGKSTLARLLVGLERPTSGEVRFRGVPLTKLDRSGMKAFRREVQLIFQDSPGAVNARSSVRAIIGEPLRHLTSLDETRREERIQELLRLVELPPEIADRLPAQVSGGQLQRICIARALAVNPKLIILDEAVSNLDIHLQASALALLTKLQQEGGIAYLFVTHDLRLVQKFAARCLVMDEGQIVEEIKTADLDSMRHPASRLLREAVLPPLPVRAVETN</sequence>
<dbReference type="EC" id="7.2.2.11" evidence="1"/>
<dbReference type="EMBL" id="AM040265">
    <property type="protein sequence ID" value="CAJ12604.1"/>
    <property type="molecule type" value="Genomic_DNA"/>
</dbReference>
<dbReference type="RefSeq" id="WP_002965842.1">
    <property type="nucleotide sequence ID" value="NZ_KN046823.1"/>
</dbReference>
<dbReference type="SMR" id="Q2YL69"/>
<dbReference type="STRING" id="359391.BAB2_0438"/>
<dbReference type="GeneID" id="93015643"/>
<dbReference type="KEGG" id="bmf:BAB2_0438"/>
<dbReference type="PATRIC" id="fig|359391.11.peg.2632"/>
<dbReference type="HOGENOM" id="CLU_000604_1_23_5"/>
<dbReference type="PhylomeDB" id="Q2YL69"/>
<dbReference type="Proteomes" id="UP000002719">
    <property type="component" value="Chromosome II"/>
</dbReference>
<dbReference type="GO" id="GO:0005886">
    <property type="term" value="C:plasma membrane"/>
    <property type="evidence" value="ECO:0007669"/>
    <property type="project" value="UniProtKB-SubCell"/>
</dbReference>
<dbReference type="GO" id="GO:0015413">
    <property type="term" value="F:ABC-type nickel transporter activity"/>
    <property type="evidence" value="ECO:0007669"/>
    <property type="project" value="UniProtKB-EC"/>
</dbReference>
<dbReference type="GO" id="GO:0005524">
    <property type="term" value="F:ATP binding"/>
    <property type="evidence" value="ECO:0007669"/>
    <property type="project" value="UniProtKB-KW"/>
</dbReference>
<dbReference type="GO" id="GO:0016887">
    <property type="term" value="F:ATP hydrolysis activity"/>
    <property type="evidence" value="ECO:0007669"/>
    <property type="project" value="InterPro"/>
</dbReference>
<dbReference type="GO" id="GO:0016151">
    <property type="term" value="F:nickel cation binding"/>
    <property type="evidence" value="ECO:0007669"/>
    <property type="project" value="InterPro"/>
</dbReference>
<dbReference type="CDD" id="cd03257">
    <property type="entry name" value="ABC_NikE_OppD_transporters"/>
    <property type="match status" value="1"/>
</dbReference>
<dbReference type="Gene3D" id="3.40.50.300">
    <property type="entry name" value="P-loop containing nucleotide triphosphate hydrolases"/>
    <property type="match status" value="1"/>
</dbReference>
<dbReference type="InterPro" id="IPR003593">
    <property type="entry name" value="AAA+_ATPase"/>
</dbReference>
<dbReference type="InterPro" id="IPR050319">
    <property type="entry name" value="ABC_transp_ATP-bind"/>
</dbReference>
<dbReference type="InterPro" id="IPR003439">
    <property type="entry name" value="ABC_transporter-like_ATP-bd"/>
</dbReference>
<dbReference type="InterPro" id="IPR017871">
    <property type="entry name" value="ABC_transporter-like_CS"/>
</dbReference>
<dbReference type="InterPro" id="IPR014137">
    <property type="entry name" value="Nickel_NikE"/>
</dbReference>
<dbReference type="InterPro" id="IPR027417">
    <property type="entry name" value="P-loop_NTPase"/>
</dbReference>
<dbReference type="NCBIfam" id="TIGR02769">
    <property type="entry name" value="nickel_nikE"/>
    <property type="match status" value="1"/>
</dbReference>
<dbReference type="NCBIfam" id="NF007739">
    <property type="entry name" value="PRK10419.1"/>
    <property type="match status" value="1"/>
</dbReference>
<dbReference type="PANTHER" id="PTHR43776:SF7">
    <property type="entry name" value="D,D-DIPEPTIDE TRANSPORT ATP-BINDING PROTEIN DDPF-RELATED"/>
    <property type="match status" value="1"/>
</dbReference>
<dbReference type="PANTHER" id="PTHR43776">
    <property type="entry name" value="TRANSPORT ATP-BINDING PROTEIN"/>
    <property type="match status" value="1"/>
</dbReference>
<dbReference type="Pfam" id="PF00005">
    <property type="entry name" value="ABC_tran"/>
    <property type="match status" value="1"/>
</dbReference>
<dbReference type="SMART" id="SM00382">
    <property type="entry name" value="AAA"/>
    <property type="match status" value="1"/>
</dbReference>
<dbReference type="SUPFAM" id="SSF52540">
    <property type="entry name" value="P-loop containing nucleoside triphosphate hydrolases"/>
    <property type="match status" value="1"/>
</dbReference>
<dbReference type="PROSITE" id="PS00211">
    <property type="entry name" value="ABC_TRANSPORTER_1"/>
    <property type="match status" value="1"/>
</dbReference>
<dbReference type="PROSITE" id="PS50893">
    <property type="entry name" value="ABC_TRANSPORTER_2"/>
    <property type="match status" value="1"/>
</dbReference>
<dbReference type="PROSITE" id="PS51248">
    <property type="entry name" value="NIKE"/>
    <property type="match status" value="1"/>
</dbReference>
<gene>
    <name evidence="1" type="primary">nikE</name>
    <name type="ordered locus">BAB2_0438</name>
</gene>
<organism>
    <name type="scientific">Brucella abortus (strain 2308)</name>
    <dbReference type="NCBI Taxonomy" id="359391"/>
    <lineage>
        <taxon>Bacteria</taxon>
        <taxon>Pseudomonadati</taxon>
        <taxon>Pseudomonadota</taxon>
        <taxon>Alphaproteobacteria</taxon>
        <taxon>Hyphomicrobiales</taxon>
        <taxon>Brucellaceae</taxon>
        <taxon>Brucella/Ochrobactrum group</taxon>
        <taxon>Brucella</taxon>
    </lineage>
</organism>
<reference key="1">
    <citation type="journal article" date="2005" name="Infect. Immun.">
        <title>Whole-genome analyses of speciation events in pathogenic Brucellae.</title>
        <authorList>
            <person name="Chain P.S."/>
            <person name="Comerci D.J."/>
            <person name="Tolmasky M.E."/>
            <person name="Larimer F.W."/>
            <person name="Malfatti S.A."/>
            <person name="Vergez L.M."/>
            <person name="Aguero F."/>
            <person name="Land M.L."/>
            <person name="Ugalde R.A."/>
            <person name="Garcia E."/>
        </authorList>
    </citation>
    <scope>NUCLEOTIDE SEQUENCE [LARGE SCALE GENOMIC DNA]</scope>
    <source>
        <strain>2308</strain>
    </source>
</reference>